<protein>
    <recommendedName>
        <fullName evidence="1">Translation initiation factor 6</fullName>
        <shortName evidence="1">aIF-6</shortName>
    </recommendedName>
</protein>
<organism>
    <name type="scientific">Staphylothermus marinus (strain ATCC 43588 / DSM 3639 / JCM 9404 / F1)</name>
    <dbReference type="NCBI Taxonomy" id="399550"/>
    <lineage>
        <taxon>Archaea</taxon>
        <taxon>Thermoproteota</taxon>
        <taxon>Thermoprotei</taxon>
        <taxon>Desulfurococcales</taxon>
        <taxon>Desulfurococcaceae</taxon>
        <taxon>Staphylothermus</taxon>
    </lineage>
</organism>
<name>IF6_STAMF</name>
<comment type="function">
    <text evidence="1">Binds to the 50S ribosomal subunit and prevents its association with the 30S ribosomal subunit to form the 70S initiation complex.</text>
</comment>
<comment type="similarity">
    <text evidence="1">Belongs to the eIF-6 family.</text>
</comment>
<gene>
    <name evidence="1" type="primary">eif6</name>
    <name type="ordered locus">Smar_1088</name>
</gene>
<feature type="chain" id="PRO_1000116998" description="Translation initiation factor 6">
    <location>
        <begin position="1"/>
        <end position="227"/>
    </location>
</feature>
<keyword id="KW-0396">Initiation factor</keyword>
<keyword id="KW-0648">Protein biosynthesis</keyword>
<keyword id="KW-1185">Reference proteome</keyword>
<proteinExistence type="inferred from homology"/>
<accession>A3DNH5</accession>
<dbReference type="EMBL" id="CP000575">
    <property type="protein sequence ID" value="ABN70185.1"/>
    <property type="molecule type" value="Genomic_DNA"/>
</dbReference>
<dbReference type="RefSeq" id="WP_011839376.1">
    <property type="nucleotide sequence ID" value="NC_009033.1"/>
</dbReference>
<dbReference type="SMR" id="A3DNH5"/>
<dbReference type="STRING" id="399550.Smar_1088"/>
<dbReference type="GeneID" id="4907162"/>
<dbReference type="KEGG" id="smr:Smar_1088"/>
<dbReference type="eggNOG" id="arCOG04176">
    <property type="taxonomic scope" value="Archaea"/>
</dbReference>
<dbReference type="HOGENOM" id="CLU_071894_1_0_2"/>
<dbReference type="OrthoDB" id="33582at2157"/>
<dbReference type="Proteomes" id="UP000000254">
    <property type="component" value="Chromosome"/>
</dbReference>
<dbReference type="GO" id="GO:0043022">
    <property type="term" value="F:ribosome binding"/>
    <property type="evidence" value="ECO:0007669"/>
    <property type="project" value="InterPro"/>
</dbReference>
<dbReference type="GO" id="GO:0003743">
    <property type="term" value="F:translation initiation factor activity"/>
    <property type="evidence" value="ECO:0007669"/>
    <property type="project" value="UniProtKB-UniRule"/>
</dbReference>
<dbReference type="GO" id="GO:0042256">
    <property type="term" value="P:cytosolic ribosome assembly"/>
    <property type="evidence" value="ECO:0007669"/>
    <property type="project" value="InterPro"/>
</dbReference>
<dbReference type="Gene3D" id="3.75.10.10">
    <property type="entry name" value="L-arginine/glycine Amidinotransferase, Chain A"/>
    <property type="match status" value="1"/>
</dbReference>
<dbReference type="HAMAP" id="MF_00032">
    <property type="entry name" value="eIF_6"/>
    <property type="match status" value="1"/>
</dbReference>
<dbReference type="InterPro" id="IPR002769">
    <property type="entry name" value="eIF6"/>
</dbReference>
<dbReference type="NCBIfam" id="TIGR00323">
    <property type="entry name" value="eIF-6"/>
    <property type="match status" value="1"/>
</dbReference>
<dbReference type="PANTHER" id="PTHR10784">
    <property type="entry name" value="TRANSLATION INITIATION FACTOR 6"/>
    <property type="match status" value="1"/>
</dbReference>
<dbReference type="Pfam" id="PF01912">
    <property type="entry name" value="eIF-6"/>
    <property type="match status" value="1"/>
</dbReference>
<dbReference type="PIRSF" id="PIRSF006413">
    <property type="entry name" value="IF-6"/>
    <property type="match status" value="1"/>
</dbReference>
<dbReference type="SMART" id="SM00654">
    <property type="entry name" value="eIF6"/>
    <property type="match status" value="1"/>
</dbReference>
<dbReference type="SUPFAM" id="SSF55909">
    <property type="entry name" value="Pentein"/>
    <property type="match status" value="1"/>
</dbReference>
<sequence length="227" mass="24513">MEIVRLSLFGNPNIGVYVFANNSIALVPPSLSSGEKKVIAETLDVELVETKIANTILNGVLVVGNDNGIILPRIILDEELDILNNNLKKHDLNIYVSRSKNTALGNILLCNNKACIAGSELERQELNKISEALGVEALYKDIMNLTIPGSLAVVTDKGGVIHPDISDDENRELKEIFKVAFERATVNSGIPFIKSGLIANNKGIIVGEYTTGPEILRIRRGLSGGAI</sequence>
<evidence type="ECO:0000255" key="1">
    <source>
        <dbReference type="HAMAP-Rule" id="MF_00032"/>
    </source>
</evidence>
<reference key="1">
    <citation type="journal article" date="2009" name="BMC Genomics">
        <title>The complete genome sequence of Staphylothermus marinus reveals differences in sulfur metabolism among heterotrophic Crenarchaeota.</title>
        <authorList>
            <person name="Anderson I.J."/>
            <person name="Dharmarajan L."/>
            <person name="Rodriguez J."/>
            <person name="Hooper S."/>
            <person name="Porat I."/>
            <person name="Ulrich L.E."/>
            <person name="Elkins J.G."/>
            <person name="Mavromatis K."/>
            <person name="Sun H."/>
            <person name="Land M."/>
            <person name="Lapidus A."/>
            <person name="Lucas S."/>
            <person name="Barry K."/>
            <person name="Huber H."/>
            <person name="Zhulin I.B."/>
            <person name="Whitman W.B."/>
            <person name="Mukhopadhyay B."/>
            <person name="Woese C."/>
            <person name="Bristow J."/>
            <person name="Kyrpides N."/>
        </authorList>
    </citation>
    <scope>NUCLEOTIDE SEQUENCE [LARGE SCALE GENOMIC DNA]</scope>
    <source>
        <strain>ATCC 43588 / DSM 3639 / JCM 9404 / F1</strain>
    </source>
</reference>
<reference key="2">
    <citation type="journal article" date="2009" name="Stand. Genomic Sci.">
        <title>Complete genome sequence of Staphylothermus marinus Stetter and Fiala 1986 type strain F1.</title>
        <authorList>
            <person name="Anderson I.J."/>
            <person name="Sun H."/>
            <person name="Lapidus A."/>
            <person name="Copeland A."/>
            <person name="Glavina Del Rio T."/>
            <person name="Tice H."/>
            <person name="Dalin E."/>
            <person name="Lucas S."/>
            <person name="Barry K."/>
            <person name="Land M."/>
            <person name="Richardson P."/>
            <person name="Huber H."/>
            <person name="Kyrpides N.C."/>
        </authorList>
    </citation>
    <scope>NUCLEOTIDE SEQUENCE [LARGE SCALE GENOMIC DNA]</scope>
    <source>
        <strain>ATCC 43588 / DSM 3639 / JCM 9404 / F1</strain>
    </source>
</reference>